<keyword id="KW-0007">Acetylation</keyword>
<keyword id="KW-0025">Alternative splicing</keyword>
<keyword id="KW-0175">Coiled coil</keyword>
<keyword id="KW-0539">Nucleus</keyword>
<keyword id="KW-0597">Phosphoprotein</keyword>
<keyword id="KW-1185">Reference proteome</keyword>
<gene>
    <name type="primary">RPRD1A</name>
    <name type="synonym">P15RS</name>
</gene>
<reference key="1">
    <citation type="journal article" date="2009" name="Science">
        <title>The genome sequence of taurine cattle: a window to ruminant biology and evolution.</title>
        <authorList>
            <consortium name="The bovine genome sequencing and analysis consortium"/>
        </authorList>
    </citation>
    <scope>NUCLEOTIDE SEQUENCE [LARGE SCALE GENOMIC DNA]</scope>
    <source>
        <strain>Hereford</strain>
    </source>
</reference>
<reference key="2">
    <citation type="submission" date="2006-08" db="EMBL/GenBank/DDBJ databases">
        <authorList>
            <consortium name="NIH - Mammalian Gene Collection (MGC) project"/>
        </authorList>
    </citation>
    <scope>NUCLEOTIDE SEQUENCE [LARGE SCALE MRNA] (ISOFORM 2)</scope>
    <source>
        <strain>Hereford</strain>
        <tissue>Fetal skin</tissue>
    </source>
</reference>
<feature type="initiator methionine" description="Removed" evidence="1">
    <location>
        <position position="1"/>
    </location>
</feature>
<feature type="chain" id="PRO_0000311343" description="Regulation of nuclear pre-mRNA domain-containing protein 1A">
    <location>
        <begin position="2"/>
        <end position="312"/>
    </location>
</feature>
<feature type="domain" description="CID" evidence="3">
    <location>
        <begin position="2"/>
        <end position="133"/>
    </location>
</feature>
<feature type="coiled-coil region" evidence="2">
    <location>
        <begin position="244"/>
        <end position="286"/>
    </location>
</feature>
<feature type="modified residue" description="N-acetylserine" evidence="1">
    <location>
        <position position="2"/>
    </location>
</feature>
<feature type="modified residue" description="Phosphoserine" evidence="1">
    <location>
        <position position="153"/>
    </location>
</feature>
<feature type="modified residue" description="Phosphoserine" evidence="1">
    <location>
        <position position="156"/>
    </location>
</feature>
<feature type="modified residue" description="Phosphoserine" evidence="1">
    <location>
        <position position="285"/>
    </location>
</feature>
<feature type="splice variant" id="VSP_029529" description="In isoform 2." evidence="4">
    <original>EYKRKLA</original>
    <variation>VRNLFLI</variation>
    <location>
        <begin position="264"/>
        <end position="270"/>
    </location>
</feature>
<feature type="splice variant" id="VSP_029530" description="In isoform 2." evidence="4">
    <location>
        <begin position="271"/>
        <end position="312"/>
    </location>
</feature>
<evidence type="ECO:0000250" key="1">
    <source>
        <dbReference type="UniProtKB" id="Q96P16"/>
    </source>
</evidence>
<evidence type="ECO:0000255" key="2"/>
<evidence type="ECO:0000255" key="3">
    <source>
        <dbReference type="PROSITE-ProRule" id="PRU00724"/>
    </source>
</evidence>
<evidence type="ECO:0000303" key="4">
    <source ref="2"/>
</evidence>
<evidence type="ECO:0000305" key="5"/>
<proteinExistence type="evidence at transcript level"/>
<sequence>MSAFSEAALEKKLSELSNSQQSVQTLSLWLIHHRKHSRPIVTVWERELRKAKPNRKLTFLYLANDVIQNSKRKGPEFTKDFAPVIVEAFKHVSSETDESCKKHLGRVLSIWEERSVYENDVLEQLKQALYGDKKPRKRTYEQIKVDENENCSSLGSPSEPPQTLDLVRALQDLENAASGDAAVHQRIASLPVEVQEVSLLDKITDKESGERLSKMVEDACMLLADYNGRLAAEIDDRKQLTRMLADFLRCQKEALAEKEHKLEEYKRKLARVSLVRKELRSRIQSLPDLSRLPNVTGSHMHLPFAGDIYSED</sequence>
<dbReference type="EMBL" id="BC119944">
    <property type="protein sequence ID" value="AAI19945.1"/>
    <property type="molecule type" value="mRNA"/>
</dbReference>
<dbReference type="RefSeq" id="NP_001068624.1">
    <molecule id="Q0P5J9-2"/>
    <property type="nucleotide sequence ID" value="NM_001075156.1"/>
</dbReference>
<dbReference type="RefSeq" id="XP_005224014.1">
    <molecule id="Q0P5J9-1"/>
    <property type="nucleotide sequence ID" value="XM_005223957.5"/>
</dbReference>
<dbReference type="RefSeq" id="XP_010816978.1">
    <molecule id="Q0P5J9-1"/>
    <property type="nucleotide sequence ID" value="XM_010818676.4"/>
</dbReference>
<dbReference type="SMR" id="Q0P5J9"/>
<dbReference type="FunCoup" id="Q0P5J9">
    <property type="interactions" value="4051"/>
</dbReference>
<dbReference type="STRING" id="9913.ENSBTAP00000007226"/>
<dbReference type="PaxDb" id="9913-ENSBTAP00000007226"/>
<dbReference type="Ensembl" id="ENSBTAT00000056481.3">
    <molecule id="Q0P5J9-2"/>
    <property type="protein sequence ID" value="ENSBTAP00000048688.1"/>
    <property type="gene ID" value="ENSBTAG00000005497.6"/>
</dbReference>
<dbReference type="GeneID" id="504355"/>
<dbReference type="KEGG" id="bta:504355"/>
<dbReference type="CTD" id="55197"/>
<dbReference type="VEuPathDB" id="HostDB:ENSBTAG00000005497"/>
<dbReference type="eggNOG" id="KOG2669">
    <property type="taxonomic scope" value="Eukaryota"/>
</dbReference>
<dbReference type="GeneTree" id="ENSGT00950000183094"/>
<dbReference type="HOGENOM" id="CLU_055523_1_0_1"/>
<dbReference type="InParanoid" id="Q0P5J9"/>
<dbReference type="OMA" id="LWMQRLK"/>
<dbReference type="OrthoDB" id="10069473at2759"/>
<dbReference type="TreeFam" id="TF320926"/>
<dbReference type="Reactome" id="R-BTA-6807505">
    <property type="pathway name" value="RNA polymerase II transcribes snRNA genes"/>
</dbReference>
<dbReference type="Proteomes" id="UP000009136">
    <property type="component" value="Chromosome 24"/>
</dbReference>
<dbReference type="Bgee" id="ENSBTAG00000005497">
    <property type="expression patterns" value="Expressed in occipital lobe and 108 other cell types or tissues"/>
</dbReference>
<dbReference type="GO" id="GO:0005634">
    <property type="term" value="C:nucleus"/>
    <property type="evidence" value="ECO:0000250"/>
    <property type="project" value="UniProtKB"/>
</dbReference>
<dbReference type="GO" id="GO:0097550">
    <property type="term" value="C:transcription preinitiation complex"/>
    <property type="evidence" value="ECO:0000250"/>
    <property type="project" value="UniProtKB"/>
</dbReference>
<dbReference type="GO" id="GO:0099122">
    <property type="term" value="F:RNA polymerase II C-terminal domain binding"/>
    <property type="evidence" value="ECO:0007669"/>
    <property type="project" value="InterPro"/>
</dbReference>
<dbReference type="GO" id="GO:0000993">
    <property type="term" value="F:RNA polymerase II complex binding"/>
    <property type="evidence" value="ECO:0000318"/>
    <property type="project" value="GO_Central"/>
</dbReference>
<dbReference type="GO" id="GO:0031124">
    <property type="term" value="P:mRNA 3'-end processing"/>
    <property type="evidence" value="ECO:0000318"/>
    <property type="project" value="GO_Central"/>
</dbReference>
<dbReference type="GO" id="GO:0001111">
    <property type="term" value="P:RNA polymerase II promoter clearance"/>
    <property type="evidence" value="ECO:0000250"/>
    <property type="project" value="UniProtKB"/>
</dbReference>
<dbReference type="CDD" id="cd17011">
    <property type="entry name" value="CID_RPRD1A"/>
    <property type="match status" value="1"/>
</dbReference>
<dbReference type="FunFam" id="1.25.40.90:FF:000007">
    <property type="entry name" value="Regulation of nuclear pre-mRNA domain-containing protein 1B"/>
    <property type="match status" value="1"/>
</dbReference>
<dbReference type="Gene3D" id="1.25.40.90">
    <property type="match status" value="1"/>
</dbReference>
<dbReference type="Gene3D" id="6.10.250.2560">
    <property type="match status" value="1"/>
</dbReference>
<dbReference type="InterPro" id="IPR006569">
    <property type="entry name" value="CID_dom"/>
</dbReference>
<dbReference type="InterPro" id="IPR008942">
    <property type="entry name" value="ENTH_VHS"/>
</dbReference>
<dbReference type="InterPro" id="IPR032337">
    <property type="entry name" value="RPRD1A/B_C"/>
</dbReference>
<dbReference type="InterPro" id="IPR047884">
    <property type="entry name" value="RPRD1A_CID"/>
</dbReference>
<dbReference type="PANTHER" id="PTHR12460">
    <property type="entry name" value="CYCLIN-DEPENDENT KINASE INHIBITOR-RELATED PROTEIN"/>
    <property type="match status" value="1"/>
</dbReference>
<dbReference type="PANTHER" id="PTHR12460:SF2">
    <property type="entry name" value="REGULATION OF NUCLEAR PRE-MRNA DOMAIN-CONTAINING PROTEIN 1A"/>
    <property type="match status" value="1"/>
</dbReference>
<dbReference type="Pfam" id="PF04818">
    <property type="entry name" value="CID"/>
    <property type="match status" value="1"/>
</dbReference>
<dbReference type="Pfam" id="PF16566">
    <property type="entry name" value="CREPT"/>
    <property type="match status" value="1"/>
</dbReference>
<dbReference type="SMART" id="SM00582">
    <property type="entry name" value="RPR"/>
    <property type="match status" value="1"/>
</dbReference>
<dbReference type="SUPFAM" id="SSF48464">
    <property type="entry name" value="ENTH/VHS domain"/>
    <property type="match status" value="1"/>
</dbReference>
<dbReference type="PROSITE" id="PS51391">
    <property type="entry name" value="CID"/>
    <property type="match status" value="1"/>
</dbReference>
<accession>Q0P5J9</accession>
<organism>
    <name type="scientific">Bos taurus</name>
    <name type="common">Bovine</name>
    <dbReference type="NCBI Taxonomy" id="9913"/>
    <lineage>
        <taxon>Eukaryota</taxon>
        <taxon>Metazoa</taxon>
        <taxon>Chordata</taxon>
        <taxon>Craniata</taxon>
        <taxon>Vertebrata</taxon>
        <taxon>Euteleostomi</taxon>
        <taxon>Mammalia</taxon>
        <taxon>Eutheria</taxon>
        <taxon>Laurasiatheria</taxon>
        <taxon>Artiodactyla</taxon>
        <taxon>Ruminantia</taxon>
        <taxon>Pecora</taxon>
        <taxon>Bovidae</taxon>
        <taxon>Bovinae</taxon>
        <taxon>Bos</taxon>
    </lineage>
</organism>
<name>RPR1A_BOVIN</name>
<comment type="function">
    <text evidence="1">Interacts with phosphorylated C-terminal heptapeptide repeat domain (CTD) of the largest RNA polymerase II subunit POLR2A, and participates in dephosphorylation of the CTD by RPAP2. May act as a negative regulator of cyclin-D1 (CCND1) and cyclin-E (CCNE1) in the cell cycle.</text>
</comment>
<comment type="subunit">
    <text evidence="1">May form a heterodimer with RPRD1B. Associates with the RNA polymerase II subunit POLR2A (via CTD phosphorylated at 'Ser-2' and 'Ser-7' of the heptad repeats).</text>
</comment>
<comment type="subcellular location">
    <subcellularLocation>
        <location evidence="1">Nucleus</location>
    </subcellularLocation>
</comment>
<comment type="alternative products">
    <event type="alternative splicing"/>
    <isoform>
        <id>Q0P5J9-1</id>
        <name>1</name>
        <sequence type="displayed"/>
    </isoform>
    <isoform>
        <id>Q0P5J9-2</id>
        <name>2</name>
        <sequence type="described" ref="VSP_029529 VSP_029530"/>
    </isoform>
</comment>
<comment type="similarity">
    <text evidence="5">Belongs to the UPF0400 (RTT103) family.</text>
</comment>
<protein>
    <recommendedName>
        <fullName>Regulation of nuclear pre-mRNA domain-containing protein 1A</fullName>
    </recommendedName>
    <alternativeName>
        <fullName>Cyclin-dependent kinase inhibitor 2B-related protein</fullName>
    </alternativeName>
    <alternativeName>
        <fullName>p15INK4B-related protein</fullName>
    </alternativeName>
</protein>